<feature type="chain" id="PRO_0000272447" description="Phosphate import ATP-binding protein PstB">
    <location>
        <begin position="1"/>
        <end position="252"/>
    </location>
</feature>
<feature type="domain" description="ABC transporter" evidence="1">
    <location>
        <begin position="5"/>
        <end position="247"/>
    </location>
</feature>
<feature type="binding site" evidence="1">
    <location>
        <begin position="37"/>
        <end position="44"/>
    </location>
    <ligand>
        <name>ATP</name>
        <dbReference type="ChEBI" id="CHEBI:30616"/>
    </ligand>
</feature>
<evidence type="ECO:0000255" key="1">
    <source>
        <dbReference type="HAMAP-Rule" id="MF_01702"/>
    </source>
</evidence>
<gene>
    <name evidence="1" type="primary">pstB</name>
    <name type="ordered locus">Dgeo_0652</name>
</gene>
<protein>
    <recommendedName>
        <fullName evidence="1">Phosphate import ATP-binding protein PstB</fullName>
        <ecNumber evidence="1">7.3.2.1</ecNumber>
    </recommendedName>
    <alternativeName>
        <fullName evidence="1">ABC phosphate transporter</fullName>
    </alternativeName>
    <alternativeName>
        <fullName evidence="1">Phosphate-transporting ATPase</fullName>
    </alternativeName>
</protein>
<comment type="function">
    <text evidence="1">Part of the ABC transporter complex PstSACB involved in phosphate import. Responsible for energy coupling to the transport system.</text>
</comment>
<comment type="catalytic activity">
    <reaction evidence="1">
        <text>phosphate(out) + ATP + H2O = ADP + 2 phosphate(in) + H(+)</text>
        <dbReference type="Rhea" id="RHEA:24440"/>
        <dbReference type="ChEBI" id="CHEBI:15377"/>
        <dbReference type="ChEBI" id="CHEBI:15378"/>
        <dbReference type="ChEBI" id="CHEBI:30616"/>
        <dbReference type="ChEBI" id="CHEBI:43474"/>
        <dbReference type="ChEBI" id="CHEBI:456216"/>
        <dbReference type="EC" id="7.3.2.1"/>
    </reaction>
</comment>
<comment type="subunit">
    <text evidence="1">The complex is composed of two ATP-binding proteins (PstB), two transmembrane proteins (PstC and PstA) and a solute-binding protein (PstS).</text>
</comment>
<comment type="subcellular location">
    <subcellularLocation>
        <location evidence="1">Cell membrane</location>
        <topology evidence="1">Peripheral membrane protein</topology>
    </subcellularLocation>
</comment>
<comment type="similarity">
    <text evidence="1">Belongs to the ABC transporter superfamily. Phosphate importer (TC 3.A.1.7) family.</text>
</comment>
<keyword id="KW-0067">ATP-binding</keyword>
<keyword id="KW-1003">Cell membrane</keyword>
<keyword id="KW-0472">Membrane</keyword>
<keyword id="KW-0547">Nucleotide-binding</keyword>
<keyword id="KW-0592">Phosphate transport</keyword>
<keyword id="KW-1278">Translocase</keyword>
<keyword id="KW-0813">Transport</keyword>
<dbReference type="EC" id="7.3.2.1" evidence="1"/>
<dbReference type="EMBL" id="CP000359">
    <property type="protein sequence ID" value="ABF44954.1"/>
    <property type="molecule type" value="Genomic_DNA"/>
</dbReference>
<dbReference type="RefSeq" id="WP_011529795.1">
    <property type="nucleotide sequence ID" value="NC_008025.1"/>
</dbReference>
<dbReference type="SMR" id="Q1J0N0"/>
<dbReference type="STRING" id="319795.Dgeo_0652"/>
<dbReference type="KEGG" id="dge:Dgeo_0652"/>
<dbReference type="eggNOG" id="COG1117">
    <property type="taxonomic scope" value="Bacteria"/>
</dbReference>
<dbReference type="HOGENOM" id="CLU_000604_1_22_0"/>
<dbReference type="Proteomes" id="UP000002431">
    <property type="component" value="Chromosome"/>
</dbReference>
<dbReference type="GO" id="GO:0005886">
    <property type="term" value="C:plasma membrane"/>
    <property type="evidence" value="ECO:0007669"/>
    <property type="project" value="UniProtKB-SubCell"/>
</dbReference>
<dbReference type="GO" id="GO:0005524">
    <property type="term" value="F:ATP binding"/>
    <property type="evidence" value="ECO:0007669"/>
    <property type="project" value="UniProtKB-KW"/>
</dbReference>
<dbReference type="GO" id="GO:0016887">
    <property type="term" value="F:ATP hydrolysis activity"/>
    <property type="evidence" value="ECO:0007669"/>
    <property type="project" value="InterPro"/>
</dbReference>
<dbReference type="GO" id="GO:0015415">
    <property type="term" value="F:ATPase-coupled phosphate ion transmembrane transporter activity"/>
    <property type="evidence" value="ECO:0007669"/>
    <property type="project" value="UniProtKB-EC"/>
</dbReference>
<dbReference type="GO" id="GO:0035435">
    <property type="term" value="P:phosphate ion transmembrane transport"/>
    <property type="evidence" value="ECO:0007669"/>
    <property type="project" value="InterPro"/>
</dbReference>
<dbReference type="CDD" id="cd03260">
    <property type="entry name" value="ABC_PstB_phosphate_transporter"/>
    <property type="match status" value="1"/>
</dbReference>
<dbReference type="Gene3D" id="3.40.50.300">
    <property type="entry name" value="P-loop containing nucleotide triphosphate hydrolases"/>
    <property type="match status" value="1"/>
</dbReference>
<dbReference type="InterPro" id="IPR003593">
    <property type="entry name" value="AAA+_ATPase"/>
</dbReference>
<dbReference type="InterPro" id="IPR003439">
    <property type="entry name" value="ABC_transporter-like_ATP-bd"/>
</dbReference>
<dbReference type="InterPro" id="IPR017871">
    <property type="entry name" value="ABC_transporter-like_CS"/>
</dbReference>
<dbReference type="InterPro" id="IPR027417">
    <property type="entry name" value="P-loop_NTPase"/>
</dbReference>
<dbReference type="InterPro" id="IPR005670">
    <property type="entry name" value="PstB-like"/>
</dbReference>
<dbReference type="NCBIfam" id="TIGR00972">
    <property type="entry name" value="3a0107s01c2"/>
    <property type="match status" value="1"/>
</dbReference>
<dbReference type="PANTHER" id="PTHR43423">
    <property type="entry name" value="ABC TRANSPORTER I FAMILY MEMBER 17"/>
    <property type="match status" value="1"/>
</dbReference>
<dbReference type="PANTHER" id="PTHR43423:SF1">
    <property type="entry name" value="ABC TRANSPORTER I FAMILY MEMBER 17"/>
    <property type="match status" value="1"/>
</dbReference>
<dbReference type="Pfam" id="PF00005">
    <property type="entry name" value="ABC_tran"/>
    <property type="match status" value="1"/>
</dbReference>
<dbReference type="SMART" id="SM00382">
    <property type="entry name" value="AAA"/>
    <property type="match status" value="1"/>
</dbReference>
<dbReference type="SUPFAM" id="SSF52540">
    <property type="entry name" value="P-loop containing nucleoside triphosphate hydrolases"/>
    <property type="match status" value="1"/>
</dbReference>
<dbReference type="PROSITE" id="PS00211">
    <property type="entry name" value="ABC_TRANSPORTER_1"/>
    <property type="match status" value="1"/>
</dbReference>
<dbReference type="PROSITE" id="PS50893">
    <property type="entry name" value="ABC_TRANSPORTER_2"/>
    <property type="match status" value="1"/>
</dbReference>
<dbReference type="PROSITE" id="PS51238">
    <property type="entry name" value="PSTB"/>
    <property type="match status" value="1"/>
</dbReference>
<proteinExistence type="inferred from homology"/>
<reference key="1">
    <citation type="submission" date="2006-04" db="EMBL/GenBank/DDBJ databases">
        <title>Complete sequence of chromosome of Deinococcus geothermalis DSM 11300.</title>
        <authorList>
            <person name="Copeland A."/>
            <person name="Lucas S."/>
            <person name="Lapidus A."/>
            <person name="Barry K."/>
            <person name="Detter J.C."/>
            <person name="Glavina del Rio T."/>
            <person name="Hammon N."/>
            <person name="Israni S."/>
            <person name="Dalin E."/>
            <person name="Tice H."/>
            <person name="Pitluck S."/>
            <person name="Brettin T."/>
            <person name="Bruce D."/>
            <person name="Han C."/>
            <person name="Tapia R."/>
            <person name="Saunders E."/>
            <person name="Gilna P."/>
            <person name="Schmutz J."/>
            <person name="Larimer F."/>
            <person name="Land M."/>
            <person name="Hauser L."/>
            <person name="Kyrpides N."/>
            <person name="Kim E."/>
            <person name="Daly M.J."/>
            <person name="Fredrickson J.K."/>
            <person name="Makarova K.S."/>
            <person name="Gaidamakova E.K."/>
            <person name="Zhai M."/>
            <person name="Richardson P."/>
        </authorList>
    </citation>
    <scope>NUCLEOTIDE SEQUENCE [LARGE SCALE GENOMIC DNA]</scope>
    <source>
        <strain>DSM 11300 / CIP 105573 / AG-3a</strain>
    </source>
</reference>
<sequence>MTPLLIASDVNIFYGEKQAVCGVNLNVQRGTVNALIGPSGCGKTTFLRAINRMHDLTPGARVTGRITLDGEDIYGPRVDPVTMRRRVGMVFQKPNPFPTMSVFDNVVSGLRLAGIRDRDHLMEVAERSLRGAALWDEVKDRLKTPATGLSGGQQQRLCIARALAVEPEILLMDEPTSALDPASTARIEDLMTDLKKVTTIIIVTHNMHQAARVSDTTSFFLNGELVEHGPTEQLFTSPRDERTEAYVTGRFG</sequence>
<name>PSTB_DEIGD</name>
<organism>
    <name type="scientific">Deinococcus geothermalis (strain DSM 11300 / CIP 105573 / AG-3a)</name>
    <dbReference type="NCBI Taxonomy" id="319795"/>
    <lineage>
        <taxon>Bacteria</taxon>
        <taxon>Thermotogati</taxon>
        <taxon>Deinococcota</taxon>
        <taxon>Deinococci</taxon>
        <taxon>Deinococcales</taxon>
        <taxon>Deinococcaceae</taxon>
        <taxon>Deinococcus</taxon>
    </lineage>
</organism>
<accession>Q1J0N0</accession>